<gene>
    <name evidence="1" type="primary">rpmE2</name>
    <name type="ordered locus">BAPKO_0238</name>
    <name type="ordered locus">BafPKo_0231</name>
</gene>
<reference key="1">
    <citation type="journal article" date="2006" name="BMC Genomics">
        <title>Comparative genome analysis: selection pressure on the Borrelia vls cassettes is essential for infectivity.</title>
        <authorList>
            <person name="Gloeckner G."/>
            <person name="Schulte-Spechtel U."/>
            <person name="Schilhabel M."/>
            <person name="Felder M."/>
            <person name="Suehnel J."/>
            <person name="Wilske B."/>
            <person name="Platzer M."/>
        </authorList>
    </citation>
    <scope>NUCLEOTIDE SEQUENCE [LARGE SCALE GENOMIC DNA]</scope>
    <source>
        <strain>PKo</strain>
    </source>
</reference>
<reference key="2">
    <citation type="journal article" date="2011" name="J. Bacteriol.">
        <title>Whole-genome sequences of two Borrelia afzelii and two Borrelia garinii Lyme disease agent isolates.</title>
        <authorList>
            <person name="Casjens S.R."/>
            <person name="Mongodin E.F."/>
            <person name="Qiu W.G."/>
            <person name="Dunn J.J."/>
            <person name="Luft B.J."/>
            <person name="Fraser-Liggett C.M."/>
            <person name="Schutzer S.E."/>
        </authorList>
    </citation>
    <scope>NUCLEOTIDE SEQUENCE [LARGE SCALE GENOMIC DNA]</scope>
    <source>
        <strain>PKo</strain>
    </source>
</reference>
<dbReference type="EMBL" id="CP000395">
    <property type="protein sequence ID" value="ABH01496.1"/>
    <property type="molecule type" value="Genomic_DNA"/>
</dbReference>
<dbReference type="EMBL" id="CP002933">
    <property type="protein sequence ID" value="AEL69458.1"/>
    <property type="molecule type" value="Genomic_DNA"/>
</dbReference>
<dbReference type="RefSeq" id="WP_004790450.1">
    <property type="nucleotide sequence ID" value="NZ_CP160066.1"/>
</dbReference>
<dbReference type="SMR" id="Q0SNT2"/>
<dbReference type="STRING" id="29518.BLA32_03160"/>
<dbReference type="KEGG" id="baf:BAPKO_0238"/>
<dbReference type="KEGG" id="bafz:BafPKo_0231"/>
<dbReference type="PATRIC" id="fig|390236.22.peg.225"/>
<dbReference type="eggNOG" id="COG0254">
    <property type="taxonomic scope" value="Bacteria"/>
</dbReference>
<dbReference type="HOGENOM" id="CLU_114306_2_2_12"/>
<dbReference type="OrthoDB" id="9803251at2"/>
<dbReference type="Proteomes" id="UP000005216">
    <property type="component" value="Chromosome"/>
</dbReference>
<dbReference type="GO" id="GO:1990904">
    <property type="term" value="C:ribonucleoprotein complex"/>
    <property type="evidence" value="ECO:0007669"/>
    <property type="project" value="UniProtKB-KW"/>
</dbReference>
<dbReference type="GO" id="GO:0005840">
    <property type="term" value="C:ribosome"/>
    <property type="evidence" value="ECO:0007669"/>
    <property type="project" value="UniProtKB-KW"/>
</dbReference>
<dbReference type="GO" id="GO:0003735">
    <property type="term" value="F:structural constituent of ribosome"/>
    <property type="evidence" value="ECO:0007669"/>
    <property type="project" value="InterPro"/>
</dbReference>
<dbReference type="GO" id="GO:0006412">
    <property type="term" value="P:translation"/>
    <property type="evidence" value="ECO:0007669"/>
    <property type="project" value="UniProtKB-UniRule"/>
</dbReference>
<dbReference type="Gene3D" id="4.10.830.30">
    <property type="entry name" value="Ribosomal protein L31"/>
    <property type="match status" value="1"/>
</dbReference>
<dbReference type="HAMAP" id="MF_00502">
    <property type="entry name" value="Ribosomal_bL31_2"/>
    <property type="match status" value="1"/>
</dbReference>
<dbReference type="InterPro" id="IPR034704">
    <property type="entry name" value="Ribosomal_bL28/bL31-like_sf"/>
</dbReference>
<dbReference type="InterPro" id="IPR002150">
    <property type="entry name" value="Ribosomal_bL31"/>
</dbReference>
<dbReference type="InterPro" id="IPR027493">
    <property type="entry name" value="Ribosomal_bL31_B"/>
</dbReference>
<dbReference type="InterPro" id="IPR042105">
    <property type="entry name" value="Ribosomal_bL31_sf"/>
</dbReference>
<dbReference type="NCBIfam" id="TIGR00105">
    <property type="entry name" value="L31"/>
    <property type="match status" value="1"/>
</dbReference>
<dbReference type="NCBIfam" id="NF002462">
    <property type="entry name" value="PRK01678.1"/>
    <property type="match status" value="1"/>
</dbReference>
<dbReference type="PANTHER" id="PTHR33280">
    <property type="entry name" value="50S RIBOSOMAL PROTEIN L31, CHLOROPLASTIC"/>
    <property type="match status" value="1"/>
</dbReference>
<dbReference type="PANTHER" id="PTHR33280:SF1">
    <property type="entry name" value="LARGE RIBOSOMAL SUBUNIT PROTEIN BL31C"/>
    <property type="match status" value="1"/>
</dbReference>
<dbReference type="Pfam" id="PF01197">
    <property type="entry name" value="Ribosomal_L31"/>
    <property type="match status" value="1"/>
</dbReference>
<dbReference type="PRINTS" id="PR01249">
    <property type="entry name" value="RIBOSOMALL31"/>
</dbReference>
<dbReference type="SUPFAM" id="SSF143800">
    <property type="entry name" value="L28p-like"/>
    <property type="match status" value="1"/>
</dbReference>
<dbReference type="PROSITE" id="PS01143">
    <property type="entry name" value="RIBOSOMAL_L31"/>
    <property type="match status" value="1"/>
</dbReference>
<keyword id="KW-0687">Ribonucleoprotein</keyword>
<keyword id="KW-0689">Ribosomal protein</keyword>
<comment type="subunit">
    <text evidence="1">Part of the 50S ribosomal subunit.</text>
</comment>
<comment type="similarity">
    <text evidence="1">Belongs to the bacterial ribosomal protein bL31 family. Type B subfamily.</text>
</comment>
<name>RL31B_BORAP</name>
<feature type="chain" id="PRO_1000014685" description="Large ribosomal subunit protein bL31B">
    <location>
        <begin position="1"/>
        <end position="81"/>
    </location>
</feature>
<organism>
    <name type="scientific">Borreliella afzelii (strain PKo)</name>
    <name type="common">Borrelia afzelii</name>
    <dbReference type="NCBI Taxonomy" id="390236"/>
    <lineage>
        <taxon>Bacteria</taxon>
        <taxon>Pseudomonadati</taxon>
        <taxon>Spirochaetota</taxon>
        <taxon>Spirochaetia</taxon>
        <taxon>Spirochaetales</taxon>
        <taxon>Borreliaceae</taxon>
        <taxon>Borreliella</taxon>
    </lineage>
</organism>
<evidence type="ECO:0000255" key="1">
    <source>
        <dbReference type="HAMAP-Rule" id="MF_00502"/>
    </source>
</evidence>
<evidence type="ECO:0000305" key="2"/>
<sequence length="81" mass="9271">MRKGVHPKNNLVVFKDGSNGAMFLTRSTLNSKETIKYIDGKEYPLITVEITSKSHPFYTGQQKFVDAAGRIDKFNKRYKKS</sequence>
<protein>
    <recommendedName>
        <fullName evidence="1">Large ribosomal subunit protein bL31B</fullName>
    </recommendedName>
    <alternativeName>
        <fullName evidence="2">50S ribosomal protein L31 type B</fullName>
    </alternativeName>
</protein>
<accession>Q0SNT2</accession>
<accession>G0IR72</accession>
<proteinExistence type="inferred from homology"/>